<name>GATA_STRS7</name>
<feature type="chain" id="PRO_1000203046" description="Glutamyl-tRNA(Gln) amidotransferase subunit A">
    <location>
        <begin position="1"/>
        <end position="488"/>
    </location>
</feature>
<feature type="active site" description="Charge relay system" evidence="1">
    <location>
        <position position="77"/>
    </location>
</feature>
<feature type="active site" description="Charge relay system" evidence="1">
    <location>
        <position position="152"/>
    </location>
</feature>
<feature type="active site" description="Acyl-ester intermediate" evidence="1">
    <location>
        <position position="176"/>
    </location>
</feature>
<sequence length="488" mass="52274">MSFNHHTIEELHELLVAKDISAVELTKATLEDIKAREEAVGSFITIACEAALKQAAALDAKGIDPDNVMSGIPLAVKDNISTKGILTTAASKMLYNYEPIFDATAVANAYDKDMIVIGKTNMDEFAMGGSTETSYFKKTKNAWDHSRVPGGSSGGSATAVASGQVRLSLGSDTGGSIRQPAAFNGVVGLKPTYGAVSRYGLIAFGSSLDQIGPFAPTVRENAQLLSVIAGSDRKDSTSAPVQIADYTSKIGQDIKGMKIALPKEYLGEGIDPKIKETILAAAQHFEKLGAIIEEVSLPHSKYGVAVYYIIASSEASSNLQRFDGIRYGFRAADAKSLEDIYVKTRSQGFGDEVKRRIMLGTFSLSSGYYDAYFKKAGQVRTLIIQDFEKVFADYDLILGPTAPTAAFELDTLNHDPVAMYLADILTIPVNLAGLPAISIPAGFADGLPVGLQLIGPKYSEEVIYQVAAAFEATTDYHKQQPMIFGGDR</sequence>
<keyword id="KW-0067">ATP-binding</keyword>
<keyword id="KW-0436">Ligase</keyword>
<keyword id="KW-0547">Nucleotide-binding</keyword>
<keyword id="KW-0648">Protein biosynthesis</keyword>
<protein>
    <recommendedName>
        <fullName evidence="1">Glutamyl-tRNA(Gln) amidotransferase subunit A</fullName>
        <shortName evidence="1">Glu-ADT subunit A</shortName>
        <ecNumber evidence="1">6.3.5.7</ecNumber>
    </recommendedName>
</protein>
<comment type="function">
    <text evidence="1">Allows the formation of correctly charged Gln-tRNA(Gln) through the transamidation of misacylated Glu-tRNA(Gln) in organisms which lack glutaminyl-tRNA synthetase. The reaction takes place in the presence of glutamine and ATP through an activated gamma-phospho-Glu-tRNA(Gln).</text>
</comment>
<comment type="catalytic activity">
    <reaction evidence="1">
        <text>L-glutamyl-tRNA(Gln) + L-glutamine + ATP + H2O = L-glutaminyl-tRNA(Gln) + L-glutamate + ADP + phosphate + H(+)</text>
        <dbReference type="Rhea" id="RHEA:17521"/>
        <dbReference type="Rhea" id="RHEA-COMP:9681"/>
        <dbReference type="Rhea" id="RHEA-COMP:9684"/>
        <dbReference type="ChEBI" id="CHEBI:15377"/>
        <dbReference type="ChEBI" id="CHEBI:15378"/>
        <dbReference type="ChEBI" id="CHEBI:29985"/>
        <dbReference type="ChEBI" id="CHEBI:30616"/>
        <dbReference type="ChEBI" id="CHEBI:43474"/>
        <dbReference type="ChEBI" id="CHEBI:58359"/>
        <dbReference type="ChEBI" id="CHEBI:78520"/>
        <dbReference type="ChEBI" id="CHEBI:78521"/>
        <dbReference type="ChEBI" id="CHEBI:456216"/>
        <dbReference type="EC" id="6.3.5.7"/>
    </reaction>
</comment>
<comment type="subunit">
    <text evidence="1">Heterotrimer of A, B and C subunits.</text>
</comment>
<comment type="similarity">
    <text evidence="1">Belongs to the amidase family. GatA subfamily.</text>
</comment>
<dbReference type="EC" id="6.3.5.7" evidence="1"/>
<dbReference type="EMBL" id="FM204884">
    <property type="protein sequence ID" value="CAX00309.1"/>
    <property type="molecule type" value="Genomic_DNA"/>
</dbReference>
<dbReference type="SMR" id="C0ME97"/>
<dbReference type="KEGG" id="seq:SZO_15890"/>
<dbReference type="eggNOG" id="COG0154">
    <property type="taxonomic scope" value="Bacteria"/>
</dbReference>
<dbReference type="HOGENOM" id="CLU_009600_0_3_9"/>
<dbReference type="Proteomes" id="UP000001368">
    <property type="component" value="Chromosome"/>
</dbReference>
<dbReference type="GO" id="GO:0030956">
    <property type="term" value="C:glutamyl-tRNA(Gln) amidotransferase complex"/>
    <property type="evidence" value="ECO:0007669"/>
    <property type="project" value="InterPro"/>
</dbReference>
<dbReference type="GO" id="GO:0005524">
    <property type="term" value="F:ATP binding"/>
    <property type="evidence" value="ECO:0007669"/>
    <property type="project" value="UniProtKB-KW"/>
</dbReference>
<dbReference type="GO" id="GO:0050567">
    <property type="term" value="F:glutaminyl-tRNA synthase (glutamine-hydrolyzing) activity"/>
    <property type="evidence" value="ECO:0007669"/>
    <property type="project" value="UniProtKB-UniRule"/>
</dbReference>
<dbReference type="GO" id="GO:0006412">
    <property type="term" value="P:translation"/>
    <property type="evidence" value="ECO:0007669"/>
    <property type="project" value="UniProtKB-UniRule"/>
</dbReference>
<dbReference type="Gene3D" id="3.90.1300.10">
    <property type="entry name" value="Amidase signature (AS) domain"/>
    <property type="match status" value="1"/>
</dbReference>
<dbReference type="HAMAP" id="MF_00120">
    <property type="entry name" value="GatA"/>
    <property type="match status" value="1"/>
</dbReference>
<dbReference type="InterPro" id="IPR000120">
    <property type="entry name" value="Amidase"/>
</dbReference>
<dbReference type="InterPro" id="IPR020556">
    <property type="entry name" value="Amidase_CS"/>
</dbReference>
<dbReference type="InterPro" id="IPR023631">
    <property type="entry name" value="Amidase_dom"/>
</dbReference>
<dbReference type="InterPro" id="IPR036928">
    <property type="entry name" value="AS_sf"/>
</dbReference>
<dbReference type="InterPro" id="IPR004412">
    <property type="entry name" value="GatA"/>
</dbReference>
<dbReference type="NCBIfam" id="TIGR00132">
    <property type="entry name" value="gatA"/>
    <property type="match status" value="1"/>
</dbReference>
<dbReference type="PANTHER" id="PTHR11895:SF151">
    <property type="entry name" value="GLUTAMYL-TRNA(GLN) AMIDOTRANSFERASE SUBUNIT A"/>
    <property type="match status" value="1"/>
</dbReference>
<dbReference type="PANTHER" id="PTHR11895">
    <property type="entry name" value="TRANSAMIDASE"/>
    <property type="match status" value="1"/>
</dbReference>
<dbReference type="Pfam" id="PF01425">
    <property type="entry name" value="Amidase"/>
    <property type="match status" value="1"/>
</dbReference>
<dbReference type="SUPFAM" id="SSF75304">
    <property type="entry name" value="Amidase signature (AS) enzymes"/>
    <property type="match status" value="1"/>
</dbReference>
<dbReference type="PROSITE" id="PS00571">
    <property type="entry name" value="AMIDASES"/>
    <property type="match status" value="1"/>
</dbReference>
<evidence type="ECO:0000255" key="1">
    <source>
        <dbReference type="HAMAP-Rule" id="MF_00120"/>
    </source>
</evidence>
<reference key="1">
    <citation type="journal article" date="2009" name="PLoS Pathog.">
        <title>Genomic evidence for the evolution of Streptococcus equi: host restriction, increased virulence, and genetic exchange with human pathogens.</title>
        <authorList>
            <person name="Holden M.T.G."/>
            <person name="Heather Z."/>
            <person name="Paillot R."/>
            <person name="Steward K.F."/>
            <person name="Webb K."/>
            <person name="Ainslie F."/>
            <person name="Jourdan T."/>
            <person name="Bason N.C."/>
            <person name="Holroyd N.E."/>
            <person name="Mungall K."/>
            <person name="Quail M.A."/>
            <person name="Sanders M."/>
            <person name="Simmonds M."/>
            <person name="Willey D."/>
            <person name="Brooks K."/>
            <person name="Aanensen D.M."/>
            <person name="Spratt B.G."/>
            <person name="Jolley K.A."/>
            <person name="Maiden M.C.J."/>
            <person name="Kehoe M."/>
            <person name="Chanter N."/>
            <person name="Bentley S.D."/>
            <person name="Robinson C."/>
            <person name="Maskell D.J."/>
            <person name="Parkhill J."/>
            <person name="Waller A.S."/>
        </authorList>
    </citation>
    <scope>NUCLEOTIDE SEQUENCE [LARGE SCALE GENOMIC DNA]</scope>
    <source>
        <strain>H70</strain>
    </source>
</reference>
<accession>C0ME97</accession>
<proteinExistence type="inferred from homology"/>
<organism>
    <name type="scientific">Streptococcus equi subsp. zooepidemicus (strain H70)</name>
    <dbReference type="NCBI Taxonomy" id="553483"/>
    <lineage>
        <taxon>Bacteria</taxon>
        <taxon>Bacillati</taxon>
        <taxon>Bacillota</taxon>
        <taxon>Bacilli</taxon>
        <taxon>Lactobacillales</taxon>
        <taxon>Streptococcaceae</taxon>
        <taxon>Streptococcus</taxon>
    </lineage>
</organism>
<gene>
    <name evidence="1" type="primary">gatA</name>
    <name type="ordered locus">SZO_15890</name>
</gene>